<comment type="function">
    <text evidence="1">Endonuclease that specifically degrades the RNA of RNA-DNA hybrids.</text>
</comment>
<comment type="catalytic activity">
    <reaction evidence="1">
        <text>Endonucleolytic cleavage to 5'-phosphomonoester.</text>
        <dbReference type="EC" id="3.1.26.4"/>
    </reaction>
</comment>
<comment type="cofactor">
    <cofactor evidence="1">
        <name>Mn(2+)</name>
        <dbReference type="ChEBI" id="CHEBI:29035"/>
    </cofactor>
    <cofactor evidence="1">
        <name>Mg(2+)</name>
        <dbReference type="ChEBI" id="CHEBI:18420"/>
    </cofactor>
    <text evidence="1">Manganese or magnesium. Binds 1 divalent metal ion per monomer in the absence of substrate. May bind a second metal ion after substrate binding.</text>
</comment>
<comment type="subcellular location">
    <subcellularLocation>
        <location evidence="1">Cytoplasm</location>
    </subcellularLocation>
</comment>
<comment type="similarity">
    <text evidence="1">Belongs to the RNase HII family.</text>
</comment>
<gene>
    <name evidence="1" type="primary">rnhB</name>
    <name type="ordered locus">NE1707</name>
</gene>
<reference key="1">
    <citation type="journal article" date="2003" name="J. Bacteriol.">
        <title>Complete genome sequence of the ammonia-oxidizing bacterium and obligate chemolithoautotroph Nitrosomonas europaea.</title>
        <authorList>
            <person name="Chain P."/>
            <person name="Lamerdin J.E."/>
            <person name="Larimer F.W."/>
            <person name="Regala W."/>
            <person name="Lao V."/>
            <person name="Land M.L."/>
            <person name="Hauser L."/>
            <person name="Hooper A.B."/>
            <person name="Klotz M.G."/>
            <person name="Norton J."/>
            <person name="Sayavedra-Soto L.A."/>
            <person name="Arciero D.M."/>
            <person name="Hommes N.G."/>
            <person name="Whittaker M.M."/>
            <person name="Arp D.J."/>
        </authorList>
    </citation>
    <scope>NUCLEOTIDE SEQUENCE [LARGE SCALE GENOMIC DNA]</scope>
    <source>
        <strain>ATCC 19718 / CIP 103999 / KCTC 2705 / NBRC 14298</strain>
    </source>
</reference>
<protein>
    <recommendedName>
        <fullName evidence="1">Ribonuclease HII</fullName>
        <shortName evidence="1">RNase HII</shortName>
        <ecNumber evidence="1">3.1.26.4</ecNumber>
    </recommendedName>
</protein>
<accession>Q82U06</accession>
<dbReference type="EC" id="3.1.26.4" evidence="1"/>
<dbReference type="EMBL" id="AL954747">
    <property type="protein sequence ID" value="CAD85618.1"/>
    <property type="molecule type" value="Genomic_DNA"/>
</dbReference>
<dbReference type="RefSeq" id="WP_011112261.1">
    <property type="nucleotide sequence ID" value="NC_004757.1"/>
</dbReference>
<dbReference type="SMR" id="Q82U06"/>
<dbReference type="STRING" id="228410.NE1707"/>
<dbReference type="GeneID" id="87104867"/>
<dbReference type="KEGG" id="neu:NE1707"/>
<dbReference type="eggNOG" id="COG0164">
    <property type="taxonomic scope" value="Bacteria"/>
</dbReference>
<dbReference type="HOGENOM" id="CLU_036532_3_2_4"/>
<dbReference type="OrthoDB" id="9803420at2"/>
<dbReference type="PhylomeDB" id="Q82U06"/>
<dbReference type="Proteomes" id="UP000001416">
    <property type="component" value="Chromosome"/>
</dbReference>
<dbReference type="GO" id="GO:0005737">
    <property type="term" value="C:cytoplasm"/>
    <property type="evidence" value="ECO:0007669"/>
    <property type="project" value="UniProtKB-SubCell"/>
</dbReference>
<dbReference type="GO" id="GO:0032299">
    <property type="term" value="C:ribonuclease H2 complex"/>
    <property type="evidence" value="ECO:0007669"/>
    <property type="project" value="TreeGrafter"/>
</dbReference>
<dbReference type="GO" id="GO:0030145">
    <property type="term" value="F:manganese ion binding"/>
    <property type="evidence" value="ECO:0007669"/>
    <property type="project" value="UniProtKB-UniRule"/>
</dbReference>
<dbReference type="GO" id="GO:0003723">
    <property type="term" value="F:RNA binding"/>
    <property type="evidence" value="ECO:0007669"/>
    <property type="project" value="InterPro"/>
</dbReference>
<dbReference type="GO" id="GO:0004523">
    <property type="term" value="F:RNA-DNA hybrid ribonuclease activity"/>
    <property type="evidence" value="ECO:0007669"/>
    <property type="project" value="UniProtKB-UniRule"/>
</dbReference>
<dbReference type="GO" id="GO:0043137">
    <property type="term" value="P:DNA replication, removal of RNA primer"/>
    <property type="evidence" value="ECO:0007669"/>
    <property type="project" value="TreeGrafter"/>
</dbReference>
<dbReference type="GO" id="GO:0006298">
    <property type="term" value="P:mismatch repair"/>
    <property type="evidence" value="ECO:0007669"/>
    <property type="project" value="TreeGrafter"/>
</dbReference>
<dbReference type="CDD" id="cd07182">
    <property type="entry name" value="RNase_HII_bacteria_HII_like"/>
    <property type="match status" value="1"/>
</dbReference>
<dbReference type="FunFam" id="3.30.420.10:FF:000006">
    <property type="entry name" value="Ribonuclease HII"/>
    <property type="match status" value="1"/>
</dbReference>
<dbReference type="Gene3D" id="3.30.420.10">
    <property type="entry name" value="Ribonuclease H-like superfamily/Ribonuclease H"/>
    <property type="match status" value="1"/>
</dbReference>
<dbReference type="HAMAP" id="MF_00052_B">
    <property type="entry name" value="RNase_HII_B"/>
    <property type="match status" value="1"/>
</dbReference>
<dbReference type="InterPro" id="IPR022898">
    <property type="entry name" value="RNase_HII"/>
</dbReference>
<dbReference type="InterPro" id="IPR001352">
    <property type="entry name" value="RNase_HII/HIII"/>
</dbReference>
<dbReference type="InterPro" id="IPR024567">
    <property type="entry name" value="RNase_HII/HIII_dom"/>
</dbReference>
<dbReference type="InterPro" id="IPR012337">
    <property type="entry name" value="RNaseH-like_sf"/>
</dbReference>
<dbReference type="InterPro" id="IPR036397">
    <property type="entry name" value="RNaseH_sf"/>
</dbReference>
<dbReference type="NCBIfam" id="NF000595">
    <property type="entry name" value="PRK00015.1-3"/>
    <property type="match status" value="1"/>
</dbReference>
<dbReference type="NCBIfam" id="NF000596">
    <property type="entry name" value="PRK00015.1-4"/>
    <property type="match status" value="1"/>
</dbReference>
<dbReference type="PANTHER" id="PTHR10954">
    <property type="entry name" value="RIBONUCLEASE H2 SUBUNIT A"/>
    <property type="match status" value="1"/>
</dbReference>
<dbReference type="PANTHER" id="PTHR10954:SF18">
    <property type="entry name" value="RIBONUCLEASE HII"/>
    <property type="match status" value="1"/>
</dbReference>
<dbReference type="Pfam" id="PF01351">
    <property type="entry name" value="RNase_HII"/>
    <property type="match status" value="1"/>
</dbReference>
<dbReference type="SUPFAM" id="SSF53098">
    <property type="entry name" value="Ribonuclease H-like"/>
    <property type="match status" value="1"/>
</dbReference>
<dbReference type="PROSITE" id="PS51975">
    <property type="entry name" value="RNASE_H_2"/>
    <property type="match status" value="1"/>
</dbReference>
<organism>
    <name type="scientific">Nitrosomonas europaea (strain ATCC 19718 / CIP 103999 / KCTC 2705 / NBRC 14298)</name>
    <dbReference type="NCBI Taxonomy" id="228410"/>
    <lineage>
        <taxon>Bacteria</taxon>
        <taxon>Pseudomonadati</taxon>
        <taxon>Pseudomonadota</taxon>
        <taxon>Betaproteobacteria</taxon>
        <taxon>Nitrosomonadales</taxon>
        <taxon>Nitrosomonadaceae</taxon>
        <taxon>Nitrosomonas</taxon>
    </lineage>
</organism>
<evidence type="ECO:0000255" key="1">
    <source>
        <dbReference type="HAMAP-Rule" id="MF_00052"/>
    </source>
</evidence>
<evidence type="ECO:0000255" key="2">
    <source>
        <dbReference type="PROSITE-ProRule" id="PRU01319"/>
    </source>
</evidence>
<name>RNH2_NITEU</name>
<keyword id="KW-0963">Cytoplasm</keyword>
<keyword id="KW-0255">Endonuclease</keyword>
<keyword id="KW-0378">Hydrolase</keyword>
<keyword id="KW-0464">Manganese</keyword>
<keyword id="KW-0479">Metal-binding</keyword>
<keyword id="KW-0540">Nuclease</keyword>
<keyword id="KW-1185">Reference proteome</keyword>
<sequence length="217" mass="23698">MAERRIPLKHEYAQDGKVIYGVDEAGRGPLAGPVYAACVVLDPADVIEGLADSKQLSEKKRISLADQIKQRARAWAIASASVEEIDRLNILQASLLAMQRAVVSLRPISNALVLVDGNHAPRLDCEVQTVIRGDSLVAEISAASILAKTARDIEMLRLHEAYPVYGFDRHKGYPTKAHLEAIRLHGITDIHRRSFAPCVGQSVSGARTTSFINQKEA</sequence>
<proteinExistence type="inferred from homology"/>
<feature type="chain" id="PRO_0000111596" description="Ribonuclease HII">
    <location>
        <begin position="1"/>
        <end position="217"/>
    </location>
</feature>
<feature type="domain" description="RNase H type-2" evidence="2">
    <location>
        <begin position="17"/>
        <end position="207"/>
    </location>
</feature>
<feature type="binding site" evidence="1">
    <location>
        <position position="23"/>
    </location>
    <ligand>
        <name>a divalent metal cation</name>
        <dbReference type="ChEBI" id="CHEBI:60240"/>
    </ligand>
</feature>
<feature type="binding site" evidence="1">
    <location>
        <position position="24"/>
    </location>
    <ligand>
        <name>a divalent metal cation</name>
        <dbReference type="ChEBI" id="CHEBI:60240"/>
    </ligand>
</feature>
<feature type="binding site" evidence="1">
    <location>
        <position position="116"/>
    </location>
    <ligand>
        <name>a divalent metal cation</name>
        <dbReference type="ChEBI" id="CHEBI:60240"/>
    </ligand>
</feature>